<feature type="chain" id="PRO_0000049525" description="Catechol-2,3-dioxygenase">
    <location>
        <begin position="1"/>
        <end position="285"/>
    </location>
</feature>
<feature type="domain" description="VOC 1" evidence="2">
    <location>
        <begin position="9"/>
        <end position="126"/>
    </location>
</feature>
<feature type="domain" description="VOC 2" evidence="2">
    <location>
        <begin position="169"/>
        <end position="285"/>
    </location>
</feature>
<feature type="binding site" evidence="1">
    <location>
        <position position="213"/>
    </location>
    <ligand>
        <name>Fe cation</name>
        <dbReference type="ChEBI" id="CHEBI:24875"/>
    </ligand>
</feature>
<feature type="binding site" evidence="1">
    <location>
        <position position="264"/>
    </location>
    <ligand>
        <name>Fe cation</name>
        <dbReference type="ChEBI" id="CHEBI:24875"/>
    </ligand>
</feature>
<feature type="sequence conflict" description="In Ref. 1; BAA09109." evidence="5" ref="1">
    <original>R</original>
    <variation>L</variation>
    <location>
        <position position="68"/>
    </location>
</feature>
<protein>
    <recommendedName>
        <fullName>Catechol-2,3-dioxygenase</fullName>
        <ecNumber>1.13.11.2</ecNumber>
    </recommendedName>
    <alternativeName>
        <fullName>Catechol-induced ring cleavage extradiol dioxygenase</fullName>
    </alternativeName>
</protein>
<reference key="1">
    <citation type="journal article" date="1996" name="Microbiology">
        <title>Determination of a 12 kb nucleotide sequence around the 76 degrees region of the Bacillus subtilis chromosome.</title>
        <authorList>
            <person name="Yamamoto H."/>
            <person name="Uchiyama S."/>
            <person name="Fajar A.N."/>
            <person name="Ogasawara N."/>
            <person name="Sekiguchi J."/>
        </authorList>
    </citation>
    <scope>NUCLEOTIDE SEQUENCE [GENOMIC DNA]</scope>
    <source>
        <strain>168</strain>
    </source>
</reference>
<reference key="2">
    <citation type="journal article" date="1997" name="Nature">
        <title>The complete genome sequence of the Gram-positive bacterium Bacillus subtilis.</title>
        <authorList>
            <person name="Kunst F."/>
            <person name="Ogasawara N."/>
            <person name="Moszer I."/>
            <person name="Albertini A.M."/>
            <person name="Alloni G."/>
            <person name="Azevedo V."/>
            <person name="Bertero M.G."/>
            <person name="Bessieres P."/>
            <person name="Bolotin A."/>
            <person name="Borchert S."/>
            <person name="Borriss R."/>
            <person name="Boursier L."/>
            <person name="Brans A."/>
            <person name="Braun M."/>
            <person name="Brignell S.C."/>
            <person name="Bron S."/>
            <person name="Brouillet S."/>
            <person name="Bruschi C.V."/>
            <person name="Caldwell B."/>
            <person name="Capuano V."/>
            <person name="Carter N.M."/>
            <person name="Choi S.-K."/>
            <person name="Codani J.-J."/>
            <person name="Connerton I.F."/>
            <person name="Cummings N.J."/>
            <person name="Daniel R.A."/>
            <person name="Denizot F."/>
            <person name="Devine K.M."/>
            <person name="Duesterhoeft A."/>
            <person name="Ehrlich S.D."/>
            <person name="Emmerson P.T."/>
            <person name="Entian K.-D."/>
            <person name="Errington J."/>
            <person name="Fabret C."/>
            <person name="Ferrari E."/>
            <person name="Foulger D."/>
            <person name="Fritz C."/>
            <person name="Fujita M."/>
            <person name="Fujita Y."/>
            <person name="Fuma S."/>
            <person name="Galizzi A."/>
            <person name="Galleron N."/>
            <person name="Ghim S.-Y."/>
            <person name="Glaser P."/>
            <person name="Goffeau A."/>
            <person name="Golightly E.J."/>
            <person name="Grandi G."/>
            <person name="Guiseppi G."/>
            <person name="Guy B.J."/>
            <person name="Haga K."/>
            <person name="Haiech J."/>
            <person name="Harwood C.R."/>
            <person name="Henaut A."/>
            <person name="Hilbert H."/>
            <person name="Holsappel S."/>
            <person name="Hosono S."/>
            <person name="Hullo M.-F."/>
            <person name="Itaya M."/>
            <person name="Jones L.-M."/>
            <person name="Joris B."/>
            <person name="Karamata D."/>
            <person name="Kasahara Y."/>
            <person name="Klaerr-Blanchard M."/>
            <person name="Klein C."/>
            <person name="Kobayashi Y."/>
            <person name="Koetter P."/>
            <person name="Koningstein G."/>
            <person name="Krogh S."/>
            <person name="Kumano M."/>
            <person name="Kurita K."/>
            <person name="Lapidus A."/>
            <person name="Lardinois S."/>
            <person name="Lauber J."/>
            <person name="Lazarevic V."/>
            <person name="Lee S.-M."/>
            <person name="Levine A."/>
            <person name="Liu H."/>
            <person name="Masuda S."/>
            <person name="Mauel C."/>
            <person name="Medigue C."/>
            <person name="Medina N."/>
            <person name="Mellado R.P."/>
            <person name="Mizuno M."/>
            <person name="Moestl D."/>
            <person name="Nakai S."/>
            <person name="Noback M."/>
            <person name="Noone D."/>
            <person name="O'Reilly M."/>
            <person name="Ogawa K."/>
            <person name="Ogiwara A."/>
            <person name="Oudega B."/>
            <person name="Park S.-H."/>
            <person name="Parro V."/>
            <person name="Pohl T.M."/>
            <person name="Portetelle D."/>
            <person name="Porwollik S."/>
            <person name="Prescott A.M."/>
            <person name="Presecan E."/>
            <person name="Pujic P."/>
            <person name="Purnelle B."/>
            <person name="Rapoport G."/>
            <person name="Rey M."/>
            <person name="Reynolds S."/>
            <person name="Rieger M."/>
            <person name="Rivolta C."/>
            <person name="Rocha E."/>
            <person name="Roche B."/>
            <person name="Rose M."/>
            <person name="Sadaie Y."/>
            <person name="Sato T."/>
            <person name="Scanlan E."/>
            <person name="Schleich S."/>
            <person name="Schroeter R."/>
            <person name="Scoffone F."/>
            <person name="Sekiguchi J."/>
            <person name="Sekowska A."/>
            <person name="Seror S.J."/>
            <person name="Serror P."/>
            <person name="Shin B.-S."/>
            <person name="Soldo B."/>
            <person name="Sorokin A."/>
            <person name="Tacconi E."/>
            <person name="Takagi T."/>
            <person name="Takahashi H."/>
            <person name="Takemaru K."/>
            <person name="Takeuchi M."/>
            <person name="Tamakoshi A."/>
            <person name="Tanaka T."/>
            <person name="Terpstra P."/>
            <person name="Tognoni A."/>
            <person name="Tosato V."/>
            <person name="Uchiyama S."/>
            <person name="Vandenbol M."/>
            <person name="Vannier F."/>
            <person name="Vassarotti A."/>
            <person name="Viari A."/>
            <person name="Wambutt R."/>
            <person name="Wedler E."/>
            <person name="Wedler H."/>
            <person name="Weitzenegger T."/>
            <person name="Winters P."/>
            <person name="Wipat A."/>
            <person name="Yamamoto H."/>
            <person name="Yamane K."/>
            <person name="Yasumoto K."/>
            <person name="Yata K."/>
            <person name="Yoshida K."/>
            <person name="Yoshikawa H.-F."/>
            <person name="Zumstein E."/>
            <person name="Yoshikawa H."/>
            <person name="Danchin A."/>
        </authorList>
    </citation>
    <scope>NUCLEOTIDE SEQUENCE [LARGE SCALE GENOMIC DNA]</scope>
    <source>
        <strain>168</strain>
    </source>
</reference>
<reference key="3">
    <citation type="journal article" date="2009" name="Microbiology">
        <title>From a consortium sequence to a unified sequence: the Bacillus subtilis 168 reference genome a decade later.</title>
        <authorList>
            <person name="Barbe V."/>
            <person name="Cruveiller S."/>
            <person name="Kunst F."/>
            <person name="Lenoble P."/>
            <person name="Meurice G."/>
            <person name="Sekowska A."/>
            <person name="Vallenet D."/>
            <person name="Wang T."/>
            <person name="Moszer I."/>
            <person name="Medigue C."/>
            <person name="Danchin A."/>
        </authorList>
    </citation>
    <scope>SEQUENCE REVISION TO 68</scope>
</reference>
<reference key="4">
    <citation type="journal article" date="2006" name="Environ. Microbiol.">
        <title>Differential gene expression in response to phenol and catechol reveals different metabolic activities for the degradation of aromatic compounds in Bacillus subtilis.</title>
        <authorList>
            <person name="Tam le T."/>
            <person name="Eymann C."/>
            <person name="Albrecht D."/>
            <person name="Sietmann R."/>
            <person name="Schauer F."/>
            <person name="Hecker M."/>
            <person name="Antelmann H."/>
        </authorList>
    </citation>
    <scope>FUNCTION</scope>
    <scope>CATALYTIC ACTIVITY</scope>
    <scope>BIOPHYSICOCHEMICAL PROPERTIES</scope>
    <scope>INDUCTION</scope>
    <source>
        <strain>168</strain>
    </source>
</reference>
<reference key="5">
    <citation type="journal article" date="2007" name="Proteomics">
        <title>Transcriptome and proteome analyses in response to 2-methylhydroquinone and 6-brom-2-vinyl-chroman-4-on reveal different degradation systems involved in the catabolism of aromatic compounds in Bacillus subtilis.</title>
        <authorList>
            <person name="Nguyen V.D."/>
            <person name="Wolf C."/>
            <person name="Maeder U."/>
            <person name="Lalk M."/>
            <person name="Langer P."/>
            <person name="Lindequist U."/>
            <person name="Hecker M."/>
            <person name="Antelmann H."/>
        </authorList>
    </citation>
    <scope>INDUCTION</scope>
    <scope>NOMENCLATURE</scope>
    <source>
        <strain>168</strain>
    </source>
</reference>
<accession>P54721</accession>
<organism>
    <name type="scientific">Bacillus subtilis (strain 168)</name>
    <dbReference type="NCBI Taxonomy" id="224308"/>
    <lineage>
        <taxon>Bacteria</taxon>
        <taxon>Bacillati</taxon>
        <taxon>Bacillota</taxon>
        <taxon>Bacilli</taxon>
        <taxon>Bacillales</taxon>
        <taxon>Bacillaceae</taxon>
        <taxon>Bacillus</taxon>
    </lineage>
</organism>
<proteinExistence type="evidence at protein level"/>
<evidence type="ECO:0000250" key="1"/>
<evidence type="ECO:0000255" key="2">
    <source>
        <dbReference type="PROSITE-ProRule" id="PRU01163"/>
    </source>
</evidence>
<evidence type="ECO:0000269" key="3">
    <source>
    </source>
</evidence>
<evidence type="ECO:0000269" key="4">
    <source>
    </source>
</evidence>
<evidence type="ECO:0000305" key="5"/>
<keyword id="KW-0058">Aromatic hydrocarbons catabolism</keyword>
<keyword id="KW-0216">Detoxification</keyword>
<keyword id="KW-0223">Dioxygenase</keyword>
<keyword id="KW-0408">Iron</keyword>
<keyword id="KW-0479">Metal-binding</keyword>
<keyword id="KW-0560">Oxidoreductase</keyword>
<keyword id="KW-1185">Reference proteome</keyword>
<keyword id="KW-0677">Repeat</keyword>
<gene>
    <name type="primary">catE</name>
    <name type="synonym">yfiE</name>
    <name type="ordered locus">BSU08240</name>
</gene>
<dbReference type="EC" id="1.13.11.2"/>
<dbReference type="EMBL" id="D50543">
    <property type="protein sequence ID" value="BAA09109.1"/>
    <property type="molecule type" value="Genomic_DNA"/>
</dbReference>
<dbReference type="EMBL" id="AL009126">
    <property type="protein sequence ID" value="CAB12653.2"/>
    <property type="molecule type" value="Genomic_DNA"/>
</dbReference>
<dbReference type="PIR" id="H69802">
    <property type="entry name" value="H69802"/>
</dbReference>
<dbReference type="RefSeq" id="NP_388705.2">
    <property type="nucleotide sequence ID" value="NC_000964.3"/>
</dbReference>
<dbReference type="RefSeq" id="WP_003233597.1">
    <property type="nucleotide sequence ID" value="NZ_OZ025638.1"/>
</dbReference>
<dbReference type="SMR" id="P54721"/>
<dbReference type="FunCoup" id="P54721">
    <property type="interactions" value="52"/>
</dbReference>
<dbReference type="STRING" id="224308.BSU08240"/>
<dbReference type="PaxDb" id="224308-BSU08240"/>
<dbReference type="EnsemblBacteria" id="CAB12653">
    <property type="protein sequence ID" value="CAB12653"/>
    <property type="gene ID" value="BSU_08240"/>
</dbReference>
<dbReference type="GeneID" id="936164"/>
<dbReference type="KEGG" id="bsu:BSU08240"/>
<dbReference type="PATRIC" id="fig|224308.179.peg.890"/>
<dbReference type="eggNOG" id="COG2514">
    <property type="taxonomic scope" value="Bacteria"/>
</dbReference>
<dbReference type="InParanoid" id="P54721"/>
<dbReference type="OrthoDB" id="9792626at2"/>
<dbReference type="PhylomeDB" id="P54721"/>
<dbReference type="BioCyc" id="BSUB:BSU08240-MONOMER"/>
<dbReference type="Proteomes" id="UP000001570">
    <property type="component" value="Chromosome"/>
</dbReference>
<dbReference type="GO" id="GO:0018577">
    <property type="term" value="F:catechol 2,3-dioxygenase activity"/>
    <property type="evidence" value="ECO:0007669"/>
    <property type="project" value="UniProtKB-EC"/>
</dbReference>
<dbReference type="GO" id="GO:0008198">
    <property type="term" value="F:ferrous iron binding"/>
    <property type="evidence" value="ECO:0007669"/>
    <property type="project" value="InterPro"/>
</dbReference>
<dbReference type="GO" id="GO:0009056">
    <property type="term" value="P:catabolic process"/>
    <property type="evidence" value="ECO:0007669"/>
    <property type="project" value="UniProtKB-KW"/>
</dbReference>
<dbReference type="GO" id="GO:0009636">
    <property type="term" value="P:response to toxic substance"/>
    <property type="evidence" value="ECO:0007669"/>
    <property type="project" value="UniProtKB-KW"/>
</dbReference>
<dbReference type="CDD" id="cd16359">
    <property type="entry name" value="VOC_BsCatE_like_C"/>
    <property type="match status" value="1"/>
</dbReference>
<dbReference type="CDD" id="cd07255">
    <property type="entry name" value="VOC_BsCatE_like_N"/>
    <property type="match status" value="1"/>
</dbReference>
<dbReference type="Gene3D" id="3.10.180.10">
    <property type="entry name" value="2,3-Dihydroxybiphenyl 1,2-Dioxygenase, domain 1"/>
    <property type="match status" value="2"/>
</dbReference>
<dbReference type="InterPro" id="IPR029068">
    <property type="entry name" value="Glyas_Bleomycin-R_OHBP_Dase"/>
</dbReference>
<dbReference type="InterPro" id="IPR004360">
    <property type="entry name" value="Glyas_Fos-R_dOase_dom"/>
</dbReference>
<dbReference type="InterPro" id="IPR037523">
    <property type="entry name" value="VOC"/>
</dbReference>
<dbReference type="InterPro" id="IPR000486">
    <property type="entry name" value="Xdiol_ring_cleave_dOase_1/2"/>
</dbReference>
<dbReference type="PANTHER" id="PTHR43279">
    <property type="entry name" value="CATECHOL-2,3-DIOXYGENASE"/>
    <property type="match status" value="1"/>
</dbReference>
<dbReference type="PANTHER" id="PTHR43279:SF1">
    <property type="entry name" value="CATECHOL-2,3-DIOXYGENASE"/>
    <property type="match status" value="1"/>
</dbReference>
<dbReference type="Pfam" id="PF00903">
    <property type="entry name" value="Glyoxalase"/>
    <property type="match status" value="2"/>
</dbReference>
<dbReference type="SUPFAM" id="SSF54593">
    <property type="entry name" value="Glyoxalase/Bleomycin resistance protein/Dihydroxybiphenyl dioxygenase"/>
    <property type="match status" value="2"/>
</dbReference>
<dbReference type="PROSITE" id="PS00082">
    <property type="entry name" value="EXTRADIOL_DIOXYGENAS"/>
    <property type="match status" value="1"/>
</dbReference>
<dbReference type="PROSITE" id="PS51819">
    <property type="entry name" value="VOC"/>
    <property type="match status" value="2"/>
</dbReference>
<name>CADE_BACSU</name>
<comment type="function">
    <text evidence="3">Involved in the meta cleavage of catechol to 2-hydroxymuconic semialdehyde. Essential for growth and viability in the presence of catechol and probably involved in the detoxification of catechol.</text>
</comment>
<comment type="catalytic activity">
    <reaction evidence="3">
        <text>catechol + O2 = (2Z,4E)-2-hydroxy-6-oxohexa-2,4-dienoate + H(+)</text>
        <dbReference type="Rhea" id="RHEA:17337"/>
        <dbReference type="ChEBI" id="CHEBI:15378"/>
        <dbReference type="ChEBI" id="CHEBI:15379"/>
        <dbReference type="ChEBI" id="CHEBI:18135"/>
        <dbReference type="ChEBI" id="CHEBI:71198"/>
        <dbReference type="EC" id="1.13.11.2"/>
    </reaction>
</comment>
<comment type="cofactor">
    <cofactor evidence="1">
        <name>Fe(2+)</name>
        <dbReference type="ChEBI" id="CHEBI:29033"/>
    </cofactor>
</comment>
<comment type="biophysicochemical properties">
    <kinetics>
        <Vmax evidence="3">1.04 umol/min/mg enzyme (at pH 7 and at 25 degrees Celsius)</Vmax>
    </kinetics>
</comment>
<comment type="induction">
    <text evidence="3 4">Strongly induced by catechol, less strongly by 2-methylhydroquinone (2-MHQ) but only weakly by chromanon (6-brom-2-vinyl-chroman-4-on).</text>
</comment>
<comment type="similarity">
    <text evidence="5">Belongs to the extradiol ring-cleavage dioxygenase family.</text>
</comment>
<sequence>MTSIHEDTHIGYAKLTIRSLERSLQFYCNVIGFQVLKKTDRQAELTADGKRVLLILEENPSAVVLPERSVTGLYHFAILLPDRKELGIALARLIEHGIAIGHGDHAVSEALYLSDPDGNGIEMYADRPRSTWQRDREGNYVMTTTAVDIEGLLEEAGDERKTSLPNDTIIGHIHLHVSDLKEAKAFYTDVLGFDIVGNYAGMSALFVSAGGYHHHIGLNIWAGRNAPPKPTNASGLDYYTVVLPHQEELDLVANRVKHAGYSIEETENSFRVKDPVSGAYITFVI</sequence>